<proteinExistence type="inferred from homology"/>
<gene>
    <name type="primary">etk</name>
    <name type="ordered locus">Z1398</name>
    <name type="ordered locus">ECs1137</name>
</gene>
<feature type="chain" id="PRO_0000212351" description="Tyrosine-protein kinase etk">
    <location>
        <begin position="1"/>
        <end position="726"/>
    </location>
</feature>
<feature type="topological domain" description="Cytoplasmic" evidence="2">
    <location>
        <begin position="1"/>
        <end position="32"/>
    </location>
</feature>
<feature type="transmembrane region" description="Helical" evidence="2">
    <location>
        <begin position="33"/>
        <end position="53"/>
    </location>
</feature>
<feature type="topological domain" description="Periplasmic" evidence="2">
    <location>
        <begin position="54"/>
        <end position="424"/>
    </location>
</feature>
<feature type="transmembrane region" description="Helical" evidence="2">
    <location>
        <begin position="425"/>
        <end position="445"/>
    </location>
</feature>
<feature type="topological domain" description="Cytoplasmic" evidence="2">
    <location>
        <begin position="446"/>
        <end position="726"/>
    </location>
</feature>
<protein>
    <recommendedName>
        <fullName>Tyrosine-protein kinase etk</fullName>
        <ecNumber>2.7.10.-</ecNumber>
    </recommendedName>
</protein>
<evidence type="ECO:0000250" key="1"/>
<evidence type="ECO:0000255" key="2"/>
<evidence type="ECO:0000305" key="3"/>
<accession>Q8XC28</accession>
<keyword id="KW-0067">ATP-binding</keyword>
<keyword id="KW-0997">Cell inner membrane</keyword>
<keyword id="KW-1003">Cell membrane</keyword>
<keyword id="KW-0418">Kinase</keyword>
<keyword id="KW-0472">Membrane</keyword>
<keyword id="KW-0547">Nucleotide-binding</keyword>
<keyword id="KW-0597">Phosphoprotein</keyword>
<keyword id="KW-1185">Reference proteome</keyword>
<keyword id="KW-0808">Transferase</keyword>
<keyword id="KW-0812">Transmembrane</keyword>
<keyword id="KW-1133">Transmembrane helix</keyword>
<keyword id="KW-0829">Tyrosine-protein kinase</keyword>
<reference key="1">
    <citation type="journal article" date="2001" name="Nature">
        <title>Genome sequence of enterohaemorrhagic Escherichia coli O157:H7.</title>
        <authorList>
            <person name="Perna N.T."/>
            <person name="Plunkett G. III"/>
            <person name="Burland V."/>
            <person name="Mau B."/>
            <person name="Glasner J.D."/>
            <person name="Rose D.J."/>
            <person name="Mayhew G.F."/>
            <person name="Evans P.S."/>
            <person name="Gregor J."/>
            <person name="Kirkpatrick H.A."/>
            <person name="Posfai G."/>
            <person name="Hackett J."/>
            <person name="Klink S."/>
            <person name="Boutin A."/>
            <person name="Shao Y."/>
            <person name="Miller L."/>
            <person name="Grotbeck E.J."/>
            <person name="Davis N.W."/>
            <person name="Lim A."/>
            <person name="Dimalanta E.T."/>
            <person name="Potamousis K."/>
            <person name="Apodaca J."/>
            <person name="Anantharaman T.S."/>
            <person name="Lin J."/>
            <person name="Yen G."/>
            <person name="Schwartz D.C."/>
            <person name="Welch R.A."/>
            <person name="Blattner F.R."/>
        </authorList>
    </citation>
    <scope>NUCLEOTIDE SEQUENCE [LARGE SCALE GENOMIC DNA]</scope>
    <source>
        <strain>O157:H7 / EDL933 / ATCC 700927 / EHEC</strain>
    </source>
</reference>
<reference key="2">
    <citation type="journal article" date="2001" name="DNA Res.">
        <title>Complete genome sequence of enterohemorrhagic Escherichia coli O157:H7 and genomic comparison with a laboratory strain K-12.</title>
        <authorList>
            <person name="Hayashi T."/>
            <person name="Makino K."/>
            <person name="Ohnishi M."/>
            <person name="Kurokawa K."/>
            <person name="Ishii K."/>
            <person name="Yokoyama K."/>
            <person name="Han C.-G."/>
            <person name="Ohtsubo E."/>
            <person name="Nakayama K."/>
            <person name="Murata T."/>
            <person name="Tanaka M."/>
            <person name="Tobe T."/>
            <person name="Iida T."/>
            <person name="Takami H."/>
            <person name="Honda T."/>
            <person name="Sasakawa C."/>
            <person name="Ogasawara N."/>
            <person name="Yasunaga T."/>
            <person name="Kuhara S."/>
            <person name="Shiba T."/>
            <person name="Hattori M."/>
            <person name="Shinagawa H."/>
        </authorList>
    </citation>
    <scope>NUCLEOTIDE SEQUENCE [LARGE SCALE GENOMIC DNA]</scope>
    <source>
        <strain>O157:H7 / Sakai / RIMD 0509952 / EHEC</strain>
    </source>
</reference>
<name>ETK_ECO57</name>
<comment type="catalytic activity">
    <reaction>
        <text>L-tyrosyl-[protein] + ATP = O-phospho-L-tyrosyl-[protein] + ADP + H(+)</text>
        <dbReference type="Rhea" id="RHEA:10596"/>
        <dbReference type="Rhea" id="RHEA-COMP:10136"/>
        <dbReference type="Rhea" id="RHEA-COMP:20101"/>
        <dbReference type="ChEBI" id="CHEBI:15378"/>
        <dbReference type="ChEBI" id="CHEBI:30616"/>
        <dbReference type="ChEBI" id="CHEBI:46858"/>
        <dbReference type="ChEBI" id="CHEBI:61978"/>
        <dbReference type="ChEBI" id="CHEBI:456216"/>
    </reaction>
</comment>
<comment type="subcellular location">
    <subcellularLocation>
        <location evidence="1">Cell inner membrane</location>
        <topology evidence="1">Multi-pass membrane protein</topology>
    </subcellularLocation>
</comment>
<comment type="PTM">
    <text evidence="1">Autophosphorylated. Dephosphorylated by etp (By similarity).</text>
</comment>
<comment type="similarity">
    <text evidence="3">Belongs to the etk/wzc family.</text>
</comment>
<organism>
    <name type="scientific">Escherichia coli O157:H7</name>
    <dbReference type="NCBI Taxonomy" id="83334"/>
    <lineage>
        <taxon>Bacteria</taxon>
        <taxon>Pseudomonadati</taxon>
        <taxon>Pseudomonadota</taxon>
        <taxon>Gammaproteobacteria</taxon>
        <taxon>Enterobacterales</taxon>
        <taxon>Enterobacteriaceae</taxon>
        <taxon>Escherichia</taxon>
    </lineage>
</organism>
<sequence>MTTKNMNTPPGSTQENEIDLLRLVGELWDHRKFIISVTALFTLIAVAYSLLSTPIYQADTLVQVEQKQGNAILSGLSDMIPNSSPESAPEIQLLQSRMILGKTIAELNLRDMVEQKYFPIVGRGWARLTKEKPGELAISWMHIPQLNGQDQQLTLTVGENGHYTLEGEEFTVNGMVGQRLEKDGVALTIADIKAKPGTQFVLSQRTELEAINALQETFTVSERSKESGMLELTMTGDDPQLITRILNSIANNYLQQNIARQAAQDSQSLEFLQRQLPEVRSELDQAEEKLNVYRQQRDSVDLNLEAKAVLEQIVNVDNQLNELTFREAEISQLYKKDHPTYRALLEKRQTLEQERKRLNKRVSAMPSTQQEVLRLSRDVEAGRAVYLQLLNRQQELSISKSSAIGNVRIIDPAVTQPQPVKPKKALNVVLGFILGLFISVGAVLARAMLRRGVEAPEQLEEHGISVYATIPMSEWLDKRTRLRKKNLFSNQQRHRTKNIPFLAVDNPADSAVEAVRALRTSLHFAMMETENNILMITGATPDSGKTFVSSTLAAVIAQSDQKVLFIDADLRRGYSHNLFTVSNEHGLSEYLAGKDELNKVIQHFGKGGFDVITRGQVPPNPSELLMRDRMRQLLEWANDHYDLVIVDTPPMLAVSDAAVVGRSVGTSLLVARFGLNTAKEVSLSMQRLEQAGVNIKGAILNGVIKRASTAYSYGYNYYGYSYSEKE</sequence>
<dbReference type="EC" id="2.7.10.-"/>
<dbReference type="EMBL" id="AE005174">
    <property type="protein sequence ID" value="AAG55529.1"/>
    <property type="molecule type" value="Genomic_DNA"/>
</dbReference>
<dbReference type="EMBL" id="BA000007">
    <property type="protein sequence ID" value="BAB34560.1"/>
    <property type="molecule type" value="Genomic_DNA"/>
</dbReference>
<dbReference type="PIR" id="A90771">
    <property type="entry name" value="A90771"/>
</dbReference>
<dbReference type="PIR" id="E85633">
    <property type="entry name" value="E85633"/>
</dbReference>
<dbReference type="RefSeq" id="WP_000208668.1">
    <property type="nucleotide sequence ID" value="NZ_VOAI01000025.1"/>
</dbReference>
<dbReference type="SMR" id="Q8XC28"/>
<dbReference type="STRING" id="155864.Z1398"/>
<dbReference type="GeneID" id="75171056"/>
<dbReference type="KEGG" id="ece:Z1398"/>
<dbReference type="KEGG" id="ecs:ECs_1137"/>
<dbReference type="PATRIC" id="fig|386585.9.peg.1253"/>
<dbReference type="eggNOG" id="COG0489">
    <property type="taxonomic scope" value="Bacteria"/>
</dbReference>
<dbReference type="eggNOG" id="COG3206">
    <property type="taxonomic scope" value="Bacteria"/>
</dbReference>
<dbReference type="HOGENOM" id="CLU_009912_0_0_6"/>
<dbReference type="OMA" id="QGQDKEH"/>
<dbReference type="BRENDA" id="2.7.10.1">
    <property type="organism ID" value="2026"/>
</dbReference>
<dbReference type="Proteomes" id="UP000000558">
    <property type="component" value="Chromosome"/>
</dbReference>
<dbReference type="Proteomes" id="UP000002519">
    <property type="component" value="Chromosome"/>
</dbReference>
<dbReference type="GO" id="GO:0005886">
    <property type="term" value="C:plasma membrane"/>
    <property type="evidence" value="ECO:0007669"/>
    <property type="project" value="UniProtKB-SubCell"/>
</dbReference>
<dbReference type="GO" id="GO:0005524">
    <property type="term" value="F:ATP binding"/>
    <property type="evidence" value="ECO:0007669"/>
    <property type="project" value="UniProtKB-KW"/>
</dbReference>
<dbReference type="GO" id="GO:0004713">
    <property type="term" value="F:protein tyrosine kinase activity"/>
    <property type="evidence" value="ECO:0007669"/>
    <property type="project" value="UniProtKB-KW"/>
</dbReference>
<dbReference type="CDD" id="cd05387">
    <property type="entry name" value="BY-kinase"/>
    <property type="match status" value="1"/>
</dbReference>
<dbReference type="FunFam" id="3.40.50.300:FF:000527">
    <property type="entry name" value="Tyrosine-protein kinase etk"/>
    <property type="match status" value="1"/>
</dbReference>
<dbReference type="Gene3D" id="3.40.50.300">
    <property type="entry name" value="P-loop containing nucleotide triphosphate hydrolases"/>
    <property type="match status" value="1"/>
</dbReference>
<dbReference type="InterPro" id="IPR025669">
    <property type="entry name" value="AAA_dom"/>
</dbReference>
<dbReference type="InterPro" id="IPR050445">
    <property type="entry name" value="Bact_polysacc_biosynth/exp"/>
</dbReference>
<dbReference type="InterPro" id="IPR032807">
    <property type="entry name" value="GNVR"/>
</dbReference>
<dbReference type="InterPro" id="IPR003856">
    <property type="entry name" value="LPS_length_determ_N_term"/>
</dbReference>
<dbReference type="InterPro" id="IPR027417">
    <property type="entry name" value="P-loop_NTPase"/>
</dbReference>
<dbReference type="InterPro" id="IPR005702">
    <property type="entry name" value="Wzc-like_C"/>
</dbReference>
<dbReference type="NCBIfam" id="TIGR01007">
    <property type="entry name" value="eps_fam"/>
    <property type="match status" value="1"/>
</dbReference>
<dbReference type="NCBIfam" id="NF007350">
    <property type="entry name" value="PRK09841.1"/>
    <property type="match status" value="1"/>
</dbReference>
<dbReference type="PANTHER" id="PTHR32309">
    <property type="entry name" value="TYROSINE-PROTEIN KINASE"/>
    <property type="match status" value="1"/>
</dbReference>
<dbReference type="PANTHER" id="PTHR32309:SF32">
    <property type="entry name" value="TYROSINE-PROTEIN KINASE ETK-RELATED"/>
    <property type="match status" value="1"/>
</dbReference>
<dbReference type="Pfam" id="PF13614">
    <property type="entry name" value="AAA_31"/>
    <property type="match status" value="1"/>
</dbReference>
<dbReference type="Pfam" id="PF13807">
    <property type="entry name" value="GNVR"/>
    <property type="match status" value="1"/>
</dbReference>
<dbReference type="Pfam" id="PF23607">
    <property type="entry name" value="WZC_N"/>
    <property type="match status" value="1"/>
</dbReference>
<dbReference type="Pfam" id="PF02706">
    <property type="entry name" value="Wzz"/>
    <property type="match status" value="1"/>
</dbReference>
<dbReference type="SUPFAM" id="SSF52540">
    <property type="entry name" value="P-loop containing nucleoside triphosphate hydrolases"/>
    <property type="match status" value="1"/>
</dbReference>